<evidence type="ECO:0000255" key="1">
    <source>
        <dbReference type="HAMAP-Rule" id="MF_00745"/>
    </source>
</evidence>
<keyword id="KW-0963">Cytoplasm</keyword>
<keyword id="KW-0479">Metal-binding</keyword>
<keyword id="KW-1185">Reference proteome</keyword>
<keyword id="KW-0862">Zinc</keyword>
<feature type="chain" id="PRO_0000213307" description="Protein SprT-like">
    <location>
        <begin position="1"/>
        <end position="145"/>
    </location>
</feature>
<feature type="domain" description="SprT-like" evidence="1">
    <location>
        <begin position="4"/>
        <end position="141"/>
    </location>
</feature>
<feature type="active site" evidence="1">
    <location>
        <position position="65"/>
    </location>
</feature>
<feature type="binding site" evidence="1">
    <location>
        <position position="64"/>
    </location>
    <ligand>
        <name>Zn(2+)</name>
        <dbReference type="ChEBI" id="CHEBI:29105"/>
    </ligand>
</feature>
<feature type="binding site" evidence="1">
    <location>
        <position position="68"/>
    </location>
    <ligand>
        <name>Zn(2+)</name>
        <dbReference type="ChEBI" id="CHEBI:29105"/>
    </ligand>
</feature>
<accession>Q8DUX9</accession>
<gene>
    <name type="ordered locus">SMU_752</name>
</gene>
<name>SPRTL_STRMU</name>
<sequence length="145" mass="17114">MNLTDYVKEVSRQDFGIEFQHTASWNSRLQTTGGRFFPEDGHLDFNPKFCKKGDAGTFRKIVRHELCHYHLYYAGKGYRHGDKDFKDLLLQVNGVRYAPSIQSNTFYHYYQCESCGQVYQRKRRMNTKKYACGNCHGKLRHQNQS</sequence>
<protein>
    <recommendedName>
        <fullName evidence="1">Protein SprT-like</fullName>
    </recommendedName>
</protein>
<proteinExistence type="inferred from homology"/>
<comment type="cofactor">
    <cofactor evidence="1">
        <name>Zn(2+)</name>
        <dbReference type="ChEBI" id="CHEBI:29105"/>
    </cofactor>
    <text evidence="1">Binds 1 zinc ion.</text>
</comment>
<comment type="subcellular location">
    <subcellularLocation>
        <location evidence="1">Cytoplasm</location>
    </subcellularLocation>
</comment>
<comment type="similarity">
    <text evidence="1">Belongs to the SprT family.</text>
</comment>
<organism>
    <name type="scientific">Streptococcus mutans serotype c (strain ATCC 700610 / UA159)</name>
    <dbReference type="NCBI Taxonomy" id="210007"/>
    <lineage>
        <taxon>Bacteria</taxon>
        <taxon>Bacillati</taxon>
        <taxon>Bacillota</taxon>
        <taxon>Bacilli</taxon>
        <taxon>Lactobacillales</taxon>
        <taxon>Streptococcaceae</taxon>
        <taxon>Streptococcus</taxon>
    </lineage>
</organism>
<reference key="1">
    <citation type="journal article" date="2002" name="Proc. Natl. Acad. Sci. U.S.A.">
        <title>Genome sequence of Streptococcus mutans UA159, a cariogenic dental pathogen.</title>
        <authorList>
            <person name="Ajdic D.J."/>
            <person name="McShan W.M."/>
            <person name="McLaughlin R.E."/>
            <person name="Savic G."/>
            <person name="Chang J."/>
            <person name="Carson M.B."/>
            <person name="Primeaux C."/>
            <person name="Tian R."/>
            <person name="Kenton S."/>
            <person name="Jia H.G."/>
            <person name="Lin S.P."/>
            <person name="Qian Y."/>
            <person name="Li S."/>
            <person name="Zhu H."/>
            <person name="Najar F.Z."/>
            <person name="Lai H."/>
            <person name="White J."/>
            <person name="Roe B.A."/>
            <person name="Ferretti J.J."/>
        </authorList>
    </citation>
    <scope>NUCLEOTIDE SEQUENCE [LARGE SCALE GENOMIC DNA]</scope>
    <source>
        <strain>ATCC 700610 / UA159</strain>
    </source>
</reference>
<dbReference type="EMBL" id="AE014133">
    <property type="protein sequence ID" value="AAN58475.1"/>
    <property type="molecule type" value="Genomic_DNA"/>
</dbReference>
<dbReference type="RefSeq" id="NP_721169.1">
    <property type="nucleotide sequence ID" value="NC_004350.2"/>
</dbReference>
<dbReference type="RefSeq" id="WP_002263629.1">
    <property type="nucleotide sequence ID" value="NC_004350.2"/>
</dbReference>
<dbReference type="SMR" id="Q8DUX9"/>
<dbReference type="STRING" id="210007.SMU_752"/>
<dbReference type="KEGG" id="smu:SMU_752"/>
<dbReference type="PATRIC" id="fig|210007.7.peg.665"/>
<dbReference type="eggNOG" id="COG3091">
    <property type="taxonomic scope" value="Bacteria"/>
</dbReference>
<dbReference type="HOGENOM" id="CLU_123820_0_0_9"/>
<dbReference type="OrthoDB" id="9799909at2"/>
<dbReference type="PhylomeDB" id="Q8DUX9"/>
<dbReference type="Proteomes" id="UP000002512">
    <property type="component" value="Chromosome"/>
</dbReference>
<dbReference type="GO" id="GO:0005737">
    <property type="term" value="C:cytoplasm"/>
    <property type="evidence" value="ECO:0007669"/>
    <property type="project" value="UniProtKB-SubCell"/>
</dbReference>
<dbReference type="GO" id="GO:0008270">
    <property type="term" value="F:zinc ion binding"/>
    <property type="evidence" value="ECO:0007669"/>
    <property type="project" value="UniProtKB-UniRule"/>
</dbReference>
<dbReference type="GO" id="GO:0006950">
    <property type="term" value="P:response to stress"/>
    <property type="evidence" value="ECO:0007669"/>
    <property type="project" value="UniProtKB-ARBA"/>
</dbReference>
<dbReference type="HAMAP" id="MF_00745">
    <property type="entry name" value="SprT_like"/>
    <property type="match status" value="1"/>
</dbReference>
<dbReference type="InterPro" id="IPR006640">
    <property type="entry name" value="SprT-like_domain"/>
</dbReference>
<dbReference type="InterPro" id="IPR023524">
    <property type="entry name" value="Uncharacterised_SprT-like"/>
</dbReference>
<dbReference type="NCBIfam" id="NF003339">
    <property type="entry name" value="PRK04351.1"/>
    <property type="match status" value="1"/>
</dbReference>
<dbReference type="Pfam" id="PF10263">
    <property type="entry name" value="SprT-like"/>
    <property type="match status" value="1"/>
</dbReference>
<dbReference type="SMART" id="SM00731">
    <property type="entry name" value="SprT"/>
    <property type="match status" value="1"/>
</dbReference>